<keyword id="KW-0092">Biotin</keyword>
<keyword id="KW-0175">Coiled coil</keyword>
<keyword id="KW-0309">Germination</keyword>
<keyword id="KW-1185">Reference proteome</keyword>
<dbReference type="EMBL" id="U59626">
    <property type="protein sequence ID" value="AAC61783.1"/>
    <property type="molecule type" value="mRNA"/>
</dbReference>
<dbReference type="PIR" id="T07064">
    <property type="entry name" value="T07064"/>
</dbReference>
<dbReference type="RefSeq" id="NP_001235522.1">
    <property type="nucleotide sequence ID" value="NM_001248593.1"/>
</dbReference>
<dbReference type="SMR" id="Q39846"/>
<dbReference type="STRING" id="3847.Q39846"/>
<dbReference type="Allergome" id="8270">
    <property type="allergen name" value="Gly m 7"/>
</dbReference>
<dbReference type="PaxDb" id="3847-GLYMA13G36780.1"/>
<dbReference type="GeneID" id="547879"/>
<dbReference type="KEGG" id="gmx:547879"/>
<dbReference type="eggNOG" id="ENOG502RYHK">
    <property type="taxonomic scope" value="Eukaryota"/>
</dbReference>
<dbReference type="InParanoid" id="Q39846"/>
<dbReference type="OrthoDB" id="1907061at2759"/>
<dbReference type="Proteomes" id="UP000008827">
    <property type="component" value="Unplaced"/>
</dbReference>
<dbReference type="GO" id="GO:0009631">
    <property type="term" value="P:cold acclimation"/>
    <property type="evidence" value="ECO:0000318"/>
    <property type="project" value="GO_Central"/>
</dbReference>
<dbReference type="PANTHER" id="PTHR47877">
    <property type="entry name" value="LATE EMBRYOGENESIS ABUNDANT DOMAIN-CONTAINING PROTEIN / LEA DOMAIN-CONTAINING PROTEIN"/>
    <property type="match status" value="1"/>
</dbReference>
<dbReference type="PANTHER" id="PTHR47877:SF3">
    <property type="entry name" value="LATE EMBRYOGENESIS ABUNDANT DOMAIN-CONTAINING PROTEIN _ LEA DOMAIN-CONTAINING PROTEIN"/>
    <property type="match status" value="1"/>
</dbReference>
<evidence type="ECO:0000255" key="1"/>
<evidence type="ECO:0000256" key="2">
    <source>
        <dbReference type="SAM" id="MobiDB-lite"/>
    </source>
</evidence>
<evidence type="ECO:0000269" key="3">
    <source>
    </source>
</evidence>
<evidence type="ECO:0000305" key="4"/>
<evidence type="ECO:0000305" key="5">
    <source>
    </source>
</evidence>
<gene>
    <name type="primary">SBP65</name>
    <name type="ORF">GmPM4</name>
</gene>
<sequence length="643" mass="67878">MASEQLARRENTTTEKEIHVEKHRVPKMATHFEHLAEQAKESDITAGKDTPQGSIEALQAGERVKDHAGKAMGDIGGRGKARETHELGAHFESLADKVTDHAAANVVGNKESQREARGGVRDVGKFEMRTEGGEKGNKDRPELKTRTREVIGRTEKERGRESGGQVVAEKGRETETARGRVGAENEGARTTAVITCTLEKGGGTQKPIREEERESESERSAWEQISNYSDQATQGVKEKYERAKQAASETLNTTTQTAQEKSAQAKNLAAQAKDATLEKGQQGYAVTKDTISSAAKTASEKTAPVAEKAKDYTLQAAEKAKSAGGTTASYVGEKAVQAKDVAVESGKSAAGYAAKVAADLRDKATAVGWAAAHFSAEKTVEGTKAAAHVVEGAAGYAGHKAAELASMSAGAVKGLAASAGETAKEYTAKKKEEAQRELEAKKPSQPQEAEERPSEGIGETVRQYAQKPKPSEGNPQKEGTGSIVFTAIGETVSSAGEKVKKPFKNTMGGESEGGGGKEEGKSVIGKSLTSIGEKLGDAKQREELLDNVTGNITEGGGEVLGAVGETVAEIGQNMMKPAEIVQERAHVRQAGGVLDAIGETIAEIAETTRVMVSGEDERVLRQSVVLETRVTGRAKHEEGSHGA</sequence>
<proteinExistence type="evidence at transcript level"/>
<comment type="function">
    <text evidence="3">May serve as a biotin provider for several growth-limiting enzymes that are necessary during seed development and the subsequent germination stages, and thus may play some roles in determining seed germination capacity.</text>
</comment>
<comment type="tissue specificity">
    <text evidence="3">Expressed in the leaf primodium and the vascular tissues of the hypocotyl-radicle axis of mature seeds. High protein levels in dry and mature soybean seeds, but not found in fresh immature seeds.</text>
</comment>
<comment type="similarity">
    <text evidence="4">Belongs to the seed biotin-containing protein SBP65 family.</text>
</comment>
<feature type="chain" id="PRO_0000342636" description="Seed biotin-containing protein SBP65">
    <location>
        <begin position="1"/>
        <end position="643"/>
    </location>
</feature>
<feature type="region of interest" description="Disordered" evidence="2">
    <location>
        <begin position="105"/>
        <end position="262"/>
    </location>
</feature>
<feature type="region of interest" description="Disordered" evidence="2">
    <location>
        <begin position="426"/>
        <end position="480"/>
    </location>
</feature>
<feature type="region of interest" description="Disordered" evidence="2">
    <location>
        <begin position="501"/>
        <end position="522"/>
    </location>
</feature>
<feature type="coiled-coil region" evidence="1">
    <location>
        <begin position="237"/>
        <end position="279"/>
    </location>
</feature>
<feature type="compositionally biased region" description="Basic and acidic residues" evidence="2">
    <location>
        <begin position="111"/>
        <end position="161"/>
    </location>
</feature>
<feature type="compositionally biased region" description="Basic and acidic residues" evidence="2">
    <location>
        <begin position="169"/>
        <end position="187"/>
    </location>
</feature>
<feature type="compositionally biased region" description="Basic and acidic residues" evidence="2">
    <location>
        <begin position="207"/>
        <end position="221"/>
    </location>
</feature>
<feature type="compositionally biased region" description="Polar residues" evidence="2">
    <location>
        <begin position="223"/>
        <end position="234"/>
    </location>
</feature>
<feature type="compositionally biased region" description="Polar residues" evidence="2">
    <location>
        <begin position="247"/>
        <end position="262"/>
    </location>
</feature>
<feature type="compositionally biased region" description="Basic and acidic residues" evidence="2">
    <location>
        <begin position="426"/>
        <end position="442"/>
    </location>
</feature>
<feature type="modified residue" description="N6-biotinyllysine; atypical" evidence="5">
    <location>
        <position position="125"/>
    </location>
</feature>
<reference key="1">
    <citation type="journal article" date="1998" name="Plant Mol. Biol.">
        <title>Tissue- and stage-specific expression of a soybean (Glycine max L.) seed-maturation, biotinylated protein.</title>
        <authorList>
            <person name="Hsing Y.-C."/>
            <person name="Tsou C.-H."/>
            <person name="Hsu T.-F."/>
            <person name="Chen Z.-Y."/>
            <person name="Hsieh K.-L."/>
            <person name="Hsieh J.-S."/>
            <person name="Chow T.-Y."/>
        </authorList>
    </citation>
    <scope>NUCLEOTIDE SEQUENCE [MRNA]</scope>
    <scope>TISSUE SPECIFICITY</scope>
    <scope>FUNCTION</scope>
    <scope>BIOTINYLATION AT LYS-125</scope>
    <source>
        <strain>cv. Shi-shi</strain>
        <tissue>Cotyledon</tissue>
    </source>
</reference>
<name>SBP65_SOYBN</name>
<organism>
    <name type="scientific">Glycine max</name>
    <name type="common">Soybean</name>
    <name type="synonym">Glycine hispida</name>
    <dbReference type="NCBI Taxonomy" id="3847"/>
    <lineage>
        <taxon>Eukaryota</taxon>
        <taxon>Viridiplantae</taxon>
        <taxon>Streptophyta</taxon>
        <taxon>Embryophyta</taxon>
        <taxon>Tracheophyta</taxon>
        <taxon>Spermatophyta</taxon>
        <taxon>Magnoliopsida</taxon>
        <taxon>eudicotyledons</taxon>
        <taxon>Gunneridae</taxon>
        <taxon>Pentapetalae</taxon>
        <taxon>rosids</taxon>
        <taxon>fabids</taxon>
        <taxon>Fabales</taxon>
        <taxon>Fabaceae</taxon>
        <taxon>Papilionoideae</taxon>
        <taxon>50 kb inversion clade</taxon>
        <taxon>NPAAA clade</taxon>
        <taxon>indigoferoid/millettioid clade</taxon>
        <taxon>Phaseoleae</taxon>
        <taxon>Glycine</taxon>
        <taxon>Glycine subgen. Soja</taxon>
    </lineage>
</organism>
<accession>Q39846</accession>
<protein>
    <recommendedName>
        <fullName>Seed biotin-containing protein SBP65</fullName>
    </recommendedName>
    <alternativeName>
        <fullName>BP75</fullName>
    </alternativeName>
    <alternativeName>
        <fullName>Seed biotinylated protein of 65 kDa</fullName>
    </alternativeName>
</protein>